<evidence type="ECO:0000255" key="1">
    <source>
        <dbReference type="HAMAP-Rule" id="MF_01371"/>
    </source>
</evidence>
<evidence type="ECO:0000305" key="2"/>
<name>RL30_STRMK</name>
<gene>
    <name evidence="1" type="primary">rpmD</name>
    <name type="ordered locus">Smlt0924</name>
</gene>
<accession>B2FQK2</accession>
<comment type="subunit">
    <text evidence="1">Part of the 50S ribosomal subunit.</text>
</comment>
<comment type="similarity">
    <text evidence="1">Belongs to the universal ribosomal protein uL30 family.</text>
</comment>
<sequence>MANESNKTVKVRLVRGLRGTQSRHRLSVRALGLNKLNDVRELKDSPQVRGLINKVQYLVQVEE</sequence>
<reference key="1">
    <citation type="journal article" date="2008" name="Genome Biol.">
        <title>The complete genome, comparative and functional analysis of Stenotrophomonas maltophilia reveals an organism heavily shielded by drug resistance determinants.</title>
        <authorList>
            <person name="Crossman L.C."/>
            <person name="Gould V.C."/>
            <person name="Dow J.M."/>
            <person name="Vernikos G.S."/>
            <person name="Okazaki A."/>
            <person name="Sebaihia M."/>
            <person name="Saunders D."/>
            <person name="Arrowsmith C."/>
            <person name="Carver T."/>
            <person name="Peters N."/>
            <person name="Adlem E."/>
            <person name="Kerhornou A."/>
            <person name="Lord A."/>
            <person name="Murphy L."/>
            <person name="Seeger K."/>
            <person name="Squares R."/>
            <person name="Rutter S."/>
            <person name="Quail M.A."/>
            <person name="Rajandream M.A."/>
            <person name="Harris D."/>
            <person name="Churcher C."/>
            <person name="Bentley S.D."/>
            <person name="Parkhill J."/>
            <person name="Thomson N.R."/>
            <person name="Avison M.B."/>
        </authorList>
    </citation>
    <scope>NUCLEOTIDE SEQUENCE [LARGE SCALE GENOMIC DNA]</scope>
    <source>
        <strain>K279a</strain>
    </source>
</reference>
<dbReference type="EMBL" id="AM743169">
    <property type="protein sequence ID" value="CAQ44493.1"/>
    <property type="molecule type" value="Genomic_DNA"/>
</dbReference>
<dbReference type="RefSeq" id="WP_005408214.1">
    <property type="nucleotide sequence ID" value="NC_010943.1"/>
</dbReference>
<dbReference type="SMR" id="B2FQK2"/>
<dbReference type="EnsemblBacteria" id="CAQ44493">
    <property type="protein sequence ID" value="CAQ44493"/>
    <property type="gene ID" value="Smlt0924"/>
</dbReference>
<dbReference type="GeneID" id="97259952"/>
<dbReference type="KEGG" id="sml:Smlt0924"/>
<dbReference type="eggNOG" id="COG1841">
    <property type="taxonomic scope" value="Bacteria"/>
</dbReference>
<dbReference type="HOGENOM" id="CLU_131047_1_4_6"/>
<dbReference type="Proteomes" id="UP000008840">
    <property type="component" value="Chromosome"/>
</dbReference>
<dbReference type="GO" id="GO:0022625">
    <property type="term" value="C:cytosolic large ribosomal subunit"/>
    <property type="evidence" value="ECO:0007669"/>
    <property type="project" value="TreeGrafter"/>
</dbReference>
<dbReference type="GO" id="GO:0003735">
    <property type="term" value="F:structural constituent of ribosome"/>
    <property type="evidence" value="ECO:0007669"/>
    <property type="project" value="InterPro"/>
</dbReference>
<dbReference type="GO" id="GO:0006412">
    <property type="term" value="P:translation"/>
    <property type="evidence" value="ECO:0007669"/>
    <property type="project" value="UniProtKB-UniRule"/>
</dbReference>
<dbReference type="CDD" id="cd00355">
    <property type="entry name" value="Ribosomal_L30_like"/>
    <property type="match status" value="1"/>
</dbReference>
<dbReference type="FunFam" id="3.30.1390.20:FF:000006">
    <property type="entry name" value="50S ribosomal protein L30"/>
    <property type="match status" value="1"/>
</dbReference>
<dbReference type="Gene3D" id="3.30.1390.20">
    <property type="entry name" value="Ribosomal protein L30, ferredoxin-like fold domain"/>
    <property type="match status" value="1"/>
</dbReference>
<dbReference type="HAMAP" id="MF_01371_B">
    <property type="entry name" value="Ribosomal_uL30_B"/>
    <property type="match status" value="1"/>
</dbReference>
<dbReference type="InterPro" id="IPR036919">
    <property type="entry name" value="Ribo_uL30_ferredoxin-like_sf"/>
</dbReference>
<dbReference type="InterPro" id="IPR005996">
    <property type="entry name" value="Ribosomal_uL30_bac-type"/>
</dbReference>
<dbReference type="InterPro" id="IPR016082">
    <property type="entry name" value="Ribosomal_uL30_ferredoxin-like"/>
</dbReference>
<dbReference type="NCBIfam" id="TIGR01308">
    <property type="entry name" value="rpmD_bact"/>
    <property type="match status" value="1"/>
</dbReference>
<dbReference type="PANTHER" id="PTHR15892:SF2">
    <property type="entry name" value="LARGE RIBOSOMAL SUBUNIT PROTEIN UL30M"/>
    <property type="match status" value="1"/>
</dbReference>
<dbReference type="PANTHER" id="PTHR15892">
    <property type="entry name" value="MITOCHONDRIAL RIBOSOMAL PROTEIN L30"/>
    <property type="match status" value="1"/>
</dbReference>
<dbReference type="Pfam" id="PF00327">
    <property type="entry name" value="Ribosomal_L30"/>
    <property type="match status" value="1"/>
</dbReference>
<dbReference type="PIRSF" id="PIRSF002211">
    <property type="entry name" value="Ribosomal_L30_bac-type"/>
    <property type="match status" value="1"/>
</dbReference>
<dbReference type="SUPFAM" id="SSF55129">
    <property type="entry name" value="Ribosomal protein L30p/L7e"/>
    <property type="match status" value="1"/>
</dbReference>
<proteinExistence type="inferred from homology"/>
<protein>
    <recommendedName>
        <fullName evidence="1">Large ribosomal subunit protein uL30</fullName>
    </recommendedName>
    <alternativeName>
        <fullName evidence="2">50S ribosomal protein L30</fullName>
    </alternativeName>
</protein>
<keyword id="KW-1185">Reference proteome</keyword>
<keyword id="KW-0687">Ribonucleoprotein</keyword>
<keyword id="KW-0689">Ribosomal protein</keyword>
<organism>
    <name type="scientific">Stenotrophomonas maltophilia (strain K279a)</name>
    <dbReference type="NCBI Taxonomy" id="522373"/>
    <lineage>
        <taxon>Bacteria</taxon>
        <taxon>Pseudomonadati</taxon>
        <taxon>Pseudomonadota</taxon>
        <taxon>Gammaproteobacteria</taxon>
        <taxon>Lysobacterales</taxon>
        <taxon>Lysobacteraceae</taxon>
        <taxon>Stenotrophomonas</taxon>
        <taxon>Stenotrophomonas maltophilia group</taxon>
    </lineage>
</organism>
<feature type="chain" id="PRO_0000347147" description="Large ribosomal subunit protein uL30">
    <location>
        <begin position="1"/>
        <end position="63"/>
    </location>
</feature>